<reference key="1">
    <citation type="submission" date="2006-08" db="EMBL/GenBank/DDBJ databases">
        <title>Complete sequence of Maricaulis maris MCS10.</title>
        <authorList>
            <consortium name="US DOE Joint Genome Institute"/>
            <person name="Copeland A."/>
            <person name="Lucas S."/>
            <person name="Lapidus A."/>
            <person name="Barry K."/>
            <person name="Detter J.C."/>
            <person name="Glavina del Rio T."/>
            <person name="Hammon N."/>
            <person name="Israni S."/>
            <person name="Dalin E."/>
            <person name="Tice H."/>
            <person name="Pitluck S."/>
            <person name="Saunders E."/>
            <person name="Brettin T."/>
            <person name="Bruce D."/>
            <person name="Han C."/>
            <person name="Tapia R."/>
            <person name="Gilna P."/>
            <person name="Schmutz J."/>
            <person name="Larimer F."/>
            <person name="Land M."/>
            <person name="Hauser L."/>
            <person name="Kyrpides N."/>
            <person name="Mikhailova N."/>
            <person name="Viollier P."/>
            <person name="Stephens C."/>
            <person name="Richardson P."/>
        </authorList>
    </citation>
    <scope>NUCLEOTIDE SEQUENCE [LARGE SCALE GENOMIC DNA]</scope>
    <source>
        <strain>MCS10</strain>
    </source>
</reference>
<accession>Q0AMB1</accession>
<protein>
    <recommendedName>
        <fullName evidence="1">Large ribosomal subunit protein bL28</fullName>
    </recommendedName>
    <alternativeName>
        <fullName evidence="2">50S ribosomal protein L28</fullName>
    </alternativeName>
</protein>
<sequence length="94" mass="10362">MARRCELTGTGVLTGNNVSHAQNKSRRRFLPNLCDVTLASEKLGRGFKLRVAAKALRSVDHVGGLDVYLLKARDEKLSDKALKIKRDLKKAMAA</sequence>
<evidence type="ECO:0000255" key="1">
    <source>
        <dbReference type="HAMAP-Rule" id="MF_00373"/>
    </source>
</evidence>
<evidence type="ECO:0000305" key="2"/>
<gene>
    <name evidence="1" type="primary">rpmB</name>
    <name type="ordered locus">Mmar10_2290</name>
</gene>
<dbReference type="EMBL" id="CP000449">
    <property type="protein sequence ID" value="ABI66582.1"/>
    <property type="molecule type" value="Genomic_DNA"/>
</dbReference>
<dbReference type="RefSeq" id="WP_011644227.1">
    <property type="nucleotide sequence ID" value="NC_008347.1"/>
</dbReference>
<dbReference type="SMR" id="Q0AMB1"/>
<dbReference type="STRING" id="394221.Mmar10_2290"/>
<dbReference type="KEGG" id="mmr:Mmar10_2290"/>
<dbReference type="eggNOG" id="COG0227">
    <property type="taxonomic scope" value="Bacteria"/>
</dbReference>
<dbReference type="HOGENOM" id="CLU_064548_4_2_5"/>
<dbReference type="OrthoDB" id="9805609at2"/>
<dbReference type="Proteomes" id="UP000001964">
    <property type="component" value="Chromosome"/>
</dbReference>
<dbReference type="GO" id="GO:0022625">
    <property type="term" value="C:cytosolic large ribosomal subunit"/>
    <property type="evidence" value="ECO:0007669"/>
    <property type="project" value="TreeGrafter"/>
</dbReference>
<dbReference type="GO" id="GO:0003735">
    <property type="term" value="F:structural constituent of ribosome"/>
    <property type="evidence" value="ECO:0007669"/>
    <property type="project" value="InterPro"/>
</dbReference>
<dbReference type="GO" id="GO:0006412">
    <property type="term" value="P:translation"/>
    <property type="evidence" value="ECO:0007669"/>
    <property type="project" value="UniProtKB-UniRule"/>
</dbReference>
<dbReference type="Gene3D" id="2.30.170.40">
    <property type="entry name" value="Ribosomal protein L28/L24"/>
    <property type="match status" value="1"/>
</dbReference>
<dbReference type="HAMAP" id="MF_00373">
    <property type="entry name" value="Ribosomal_bL28"/>
    <property type="match status" value="1"/>
</dbReference>
<dbReference type="InterPro" id="IPR026569">
    <property type="entry name" value="Ribosomal_bL28"/>
</dbReference>
<dbReference type="InterPro" id="IPR034704">
    <property type="entry name" value="Ribosomal_bL28/bL31-like_sf"/>
</dbReference>
<dbReference type="InterPro" id="IPR001383">
    <property type="entry name" value="Ribosomal_bL28_bact-type"/>
</dbReference>
<dbReference type="InterPro" id="IPR037147">
    <property type="entry name" value="Ribosomal_bL28_sf"/>
</dbReference>
<dbReference type="NCBIfam" id="TIGR00009">
    <property type="entry name" value="L28"/>
    <property type="match status" value="1"/>
</dbReference>
<dbReference type="PANTHER" id="PTHR13528">
    <property type="entry name" value="39S RIBOSOMAL PROTEIN L28, MITOCHONDRIAL"/>
    <property type="match status" value="1"/>
</dbReference>
<dbReference type="PANTHER" id="PTHR13528:SF2">
    <property type="entry name" value="LARGE RIBOSOMAL SUBUNIT PROTEIN BL28M"/>
    <property type="match status" value="1"/>
</dbReference>
<dbReference type="Pfam" id="PF00830">
    <property type="entry name" value="Ribosomal_L28"/>
    <property type="match status" value="1"/>
</dbReference>
<dbReference type="SUPFAM" id="SSF143800">
    <property type="entry name" value="L28p-like"/>
    <property type="match status" value="1"/>
</dbReference>
<comment type="similarity">
    <text evidence="1">Belongs to the bacterial ribosomal protein bL28 family.</text>
</comment>
<proteinExistence type="inferred from homology"/>
<feature type="chain" id="PRO_1000007274" description="Large ribosomal subunit protein bL28">
    <location>
        <begin position="1"/>
        <end position="94"/>
    </location>
</feature>
<keyword id="KW-1185">Reference proteome</keyword>
<keyword id="KW-0687">Ribonucleoprotein</keyword>
<keyword id="KW-0689">Ribosomal protein</keyword>
<name>RL28_MARMM</name>
<organism>
    <name type="scientific">Maricaulis maris (strain MCS10)</name>
    <name type="common">Caulobacter maris</name>
    <dbReference type="NCBI Taxonomy" id="394221"/>
    <lineage>
        <taxon>Bacteria</taxon>
        <taxon>Pseudomonadati</taxon>
        <taxon>Pseudomonadota</taxon>
        <taxon>Alphaproteobacteria</taxon>
        <taxon>Maricaulales</taxon>
        <taxon>Maricaulaceae</taxon>
        <taxon>Maricaulis</taxon>
    </lineage>
</organism>